<organism>
    <name type="scientific">Caulobacter vibrioides (strain NA1000 / CB15N)</name>
    <name type="common">Caulobacter crescentus</name>
    <dbReference type="NCBI Taxonomy" id="565050"/>
    <lineage>
        <taxon>Bacteria</taxon>
        <taxon>Pseudomonadati</taxon>
        <taxon>Pseudomonadota</taxon>
        <taxon>Alphaproteobacteria</taxon>
        <taxon>Caulobacterales</taxon>
        <taxon>Caulobacteraceae</taxon>
        <taxon>Caulobacter</taxon>
    </lineage>
</organism>
<dbReference type="EMBL" id="CP001340">
    <property type="protein sequence ID" value="ACL94563.1"/>
    <property type="molecule type" value="Genomic_DNA"/>
</dbReference>
<dbReference type="RefSeq" id="WP_010918930.1">
    <property type="nucleotide sequence ID" value="NC_011916.1"/>
</dbReference>
<dbReference type="RefSeq" id="YP_002516471.1">
    <property type="nucleotide sequence ID" value="NC_011916.1"/>
</dbReference>
<dbReference type="SMR" id="B8H309"/>
<dbReference type="GeneID" id="7331467"/>
<dbReference type="KEGG" id="ccs:CCNA_01098"/>
<dbReference type="PATRIC" id="fig|565050.3.peg.1080"/>
<dbReference type="HOGENOM" id="CLU_169643_2_1_5"/>
<dbReference type="OrthoDB" id="9804851at2"/>
<dbReference type="PhylomeDB" id="B8H309"/>
<dbReference type="Proteomes" id="UP000001364">
    <property type="component" value="Chromosome"/>
</dbReference>
<dbReference type="GO" id="GO:0022625">
    <property type="term" value="C:cytosolic large ribosomal subunit"/>
    <property type="evidence" value="ECO:0007669"/>
    <property type="project" value="TreeGrafter"/>
</dbReference>
<dbReference type="GO" id="GO:0003735">
    <property type="term" value="F:structural constituent of ribosome"/>
    <property type="evidence" value="ECO:0007669"/>
    <property type="project" value="InterPro"/>
</dbReference>
<dbReference type="GO" id="GO:0006412">
    <property type="term" value="P:translation"/>
    <property type="evidence" value="ECO:0007669"/>
    <property type="project" value="UniProtKB-UniRule"/>
</dbReference>
<dbReference type="FunFam" id="4.10.410.60:FF:000001">
    <property type="entry name" value="50S ribosomal protein L35"/>
    <property type="match status" value="1"/>
</dbReference>
<dbReference type="Gene3D" id="4.10.410.60">
    <property type="match status" value="1"/>
</dbReference>
<dbReference type="HAMAP" id="MF_00514">
    <property type="entry name" value="Ribosomal_bL35"/>
    <property type="match status" value="1"/>
</dbReference>
<dbReference type="InterPro" id="IPR001706">
    <property type="entry name" value="Ribosomal_bL35"/>
</dbReference>
<dbReference type="InterPro" id="IPR021137">
    <property type="entry name" value="Ribosomal_bL35-like"/>
</dbReference>
<dbReference type="InterPro" id="IPR018265">
    <property type="entry name" value="Ribosomal_bL35_CS"/>
</dbReference>
<dbReference type="InterPro" id="IPR037229">
    <property type="entry name" value="Ribosomal_bL35_sf"/>
</dbReference>
<dbReference type="NCBIfam" id="TIGR00001">
    <property type="entry name" value="rpmI_bact"/>
    <property type="match status" value="1"/>
</dbReference>
<dbReference type="PANTHER" id="PTHR33343">
    <property type="entry name" value="54S RIBOSOMAL PROTEIN BL35M"/>
    <property type="match status" value="1"/>
</dbReference>
<dbReference type="PANTHER" id="PTHR33343:SF1">
    <property type="entry name" value="LARGE RIBOSOMAL SUBUNIT PROTEIN BL35M"/>
    <property type="match status" value="1"/>
</dbReference>
<dbReference type="Pfam" id="PF01632">
    <property type="entry name" value="Ribosomal_L35p"/>
    <property type="match status" value="1"/>
</dbReference>
<dbReference type="PRINTS" id="PR00064">
    <property type="entry name" value="RIBOSOMALL35"/>
</dbReference>
<dbReference type="SUPFAM" id="SSF143034">
    <property type="entry name" value="L35p-like"/>
    <property type="match status" value="1"/>
</dbReference>
<dbReference type="PROSITE" id="PS00936">
    <property type="entry name" value="RIBOSOMAL_L35"/>
    <property type="match status" value="1"/>
</dbReference>
<comment type="similarity">
    <text evidence="1">Belongs to the bacterial ribosomal protein bL35 family.</text>
</comment>
<gene>
    <name evidence="1" type="primary">rpmI</name>
    <name type="ordered locus">CCNA_01098</name>
</gene>
<accession>B8H309</accession>
<reference key="1">
    <citation type="journal article" date="2010" name="J. Bacteriol.">
        <title>The genetic basis of laboratory adaptation in Caulobacter crescentus.</title>
        <authorList>
            <person name="Marks M.E."/>
            <person name="Castro-Rojas C.M."/>
            <person name="Teiling C."/>
            <person name="Du L."/>
            <person name="Kapatral V."/>
            <person name="Walunas T.L."/>
            <person name="Crosson S."/>
        </authorList>
    </citation>
    <scope>NUCLEOTIDE SEQUENCE [LARGE SCALE GENOMIC DNA]</scope>
    <source>
        <strain>NA1000 / CB15N</strain>
    </source>
</reference>
<proteinExistence type="inferred from homology"/>
<evidence type="ECO:0000255" key="1">
    <source>
        <dbReference type="HAMAP-Rule" id="MF_00514"/>
    </source>
</evidence>
<evidence type="ECO:0000305" key="2"/>
<protein>
    <recommendedName>
        <fullName evidence="1">Large ribosomal subunit protein bL35</fullName>
    </recommendedName>
    <alternativeName>
        <fullName evidence="2">50S ribosomal protein L35</fullName>
    </alternativeName>
</protein>
<feature type="chain" id="PRO_1000146130" description="Large ribosomal subunit protein bL35">
    <location>
        <begin position="1"/>
        <end position="66"/>
    </location>
</feature>
<sequence length="66" mass="7354">MPKLKTKSGAKKRFKLTATGKLKAGVAGKRHRLIGHNGKYIRQNRGTKVMSEADAKIIRTYLPYGL</sequence>
<name>RL35_CAUVN</name>
<keyword id="KW-1185">Reference proteome</keyword>
<keyword id="KW-0687">Ribonucleoprotein</keyword>
<keyword id="KW-0689">Ribosomal protein</keyword>